<sequence>MNMTKTAMLIALMTVMFMSIGYLLGGGGGMMIALVIAVAMNLFGYWNSDKMVLRMYNAQEVDERSAPEYYRMVSGLAANAGLPMPKVYIIHEDQPNAFATGRNPENAAVAATTGLLNRLSPEEVAGVMAHELAHVQNRDTLTMTIVATLAGAISMLGNFAFFLGGNRENGNGVMGVVGTLLAMIVAPFGAMIVQMAVSRTREYAADKRGAEICGNPLWLSSALGRIARGAKVIPNEEAEHNPATAHMFIINPLSGRGADNLFSTHPDTDNRIAALEQMAAEMGIRSAAMTARAAAPSQNSGPWGQRSDNAGGNSNGGSRYRGPWS</sequence>
<evidence type="ECO:0000255" key="1">
    <source>
        <dbReference type="HAMAP-Rule" id="MF_00188"/>
    </source>
</evidence>
<evidence type="ECO:0000256" key="2">
    <source>
        <dbReference type="SAM" id="MobiDB-lite"/>
    </source>
</evidence>
<comment type="cofactor">
    <cofactor evidence="1">
        <name>Zn(2+)</name>
        <dbReference type="ChEBI" id="CHEBI:29105"/>
    </cofactor>
    <text evidence="1">Binds 1 zinc ion per subunit.</text>
</comment>
<comment type="subcellular location">
    <subcellularLocation>
        <location evidence="1">Cell inner membrane</location>
        <topology evidence="1">Multi-pass membrane protein</topology>
    </subcellularLocation>
</comment>
<comment type="similarity">
    <text evidence="1">Belongs to the peptidase M48B family.</text>
</comment>
<dbReference type="EC" id="3.4.24.-" evidence="1"/>
<dbReference type="EMBL" id="AE017223">
    <property type="protein sequence ID" value="AAX75110.1"/>
    <property type="molecule type" value="Genomic_DNA"/>
</dbReference>
<dbReference type="RefSeq" id="WP_002964890.1">
    <property type="nucleotide sequence ID" value="NC_006932.1"/>
</dbReference>
<dbReference type="EnsemblBacteria" id="AAX75110">
    <property type="protein sequence ID" value="AAX75110"/>
    <property type="gene ID" value="BruAb1_1793"/>
</dbReference>
<dbReference type="GeneID" id="93017847"/>
<dbReference type="KEGG" id="bmb:BruAb1_1793"/>
<dbReference type="HOGENOM" id="CLU_042266_3_0_5"/>
<dbReference type="Proteomes" id="UP000000540">
    <property type="component" value="Chromosome I"/>
</dbReference>
<dbReference type="GO" id="GO:0005886">
    <property type="term" value="C:plasma membrane"/>
    <property type="evidence" value="ECO:0007669"/>
    <property type="project" value="UniProtKB-SubCell"/>
</dbReference>
<dbReference type="GO" id="GO:0004222">
    <property type="term" value="F:metalloendopeptidase activity"/>
    <property type="evidence" value="ECO:0007669"/>
    <property type="project" value="UniProtKB-UniRule"/>
</dbReference>
<dbReference type="GO" id="GO:0008270">
    <property type="term" value="F:zinc ion binding"/>
    <property type="evidence" value="ECO:0007669"/>
    <property type="project" value="UniProtKB-UniRule"/>
</dbReference>
<dbReference type="GO" id="GO:0006508">
    <property type="term" value="P:proteolysis"/>
    <property type="evidence" value="ECO:0007669"/>
    <property type="project" value="UniProtKB-KW"/>
</dbReference>
<dbReference type="CDD" id="cd07336">
    <property type="entry name" value="M48B_HtpX_like"/>
    <property type="match status" value="1"/>
</dbReference>
<dbReference type="Gene3D" id="3.30.2010.10">
    <property type="entry name" value="Metalloproteases ('zincins'), catalytic domain"/>
    <property type="match status" value="1"/>
</dbReference>
<dbReference type="HAMAP" id="MF_00188">
    <property type="entry name" value="Pept_M48_protease_HtpX"/>
    <property type="match status" value="1"/>
</dbReference>
<dbReference type="InterPro" id="IPR050083">
    <property type="entry name" value="HtpX_protease"/>
</dbReference>
<dbReference type="InterPro" id="IPR022919">
    <property type="entry name" value="Pept_M48_protease_HtpX"/>
</dbReference>
<dbReference type="InterPro" id="IPR001915">
    <property type="entry name" value="Peptidase_M48"/>
</dbReference>
<dbReference type="NCBIfam" id="NF002363">
    <property type="entry name" value="PRK01345.1"/>
    <property type="match status" value="1"/>
</dbReference>
<dbReference type="NCBIfam" id="NF002826">
    <property type="entry name" value="PRK03001.1"/>
    <property type="match status" value="1"/>
</dbReference>
<dbReference type="PANTHER" id="PTHR43221">
    <property type="entry name" value="PROTEASE HTPX"/>
    <property type="match status" value="1"/>
</dbReference>
<dbReference type="PANTHER" id="PTHR43221:SF1">
    <property type="entry name" value="PROTEASE HTPX"/>
    <property type="match status" value="1"/>
</dbReference>
<dbReference type="Pfam" id="PF01435">
    <property type="entry name" value="Peptidase_M48"/>
    <property type="match status" value="1"/>
</dbReference>
<dbReference type="PROSITE" id="PS00142">
    <property type="entry name" value="ZINC_PROTEASE"/>
    <property type="match status" value="1"/>
</dbReference>
<proteinExistence type="inferred from homology"/>
<name>HTPX_BRUAB</name>
<reference key="1">
    <citation type="journal article" date="2005" name="J. Bacteriol.">
        <title>Completion of the genome sequence of Brucella abortus and comparison to the highly similar genomes of Brucella melitensis and Brucella suis.</title>
        <authorList>
            <person name="Halling S.M."/>
            <person name="Peterson-Burch B.D."/>
            <person name="Bricker B.J."/>
            <person name="Zuerner R.L."/>
            <person name="Qing Z."/>
            <person name="Li L.-L."/>
            <person name="Kapur V."/>
            <person name="Alt D.P."/>
            <person name="Olsen S.C."/>
        </authorList>
    </citation>
    <scope>NUCLEOTIDE SEQUENCE [LARGE SCALE GENOMIC DNA]</scope>
    <source>
        <strain>9-941</strain>
    </source>
</reference>
<protein>
    <recommendedName>
        <fullName evidence="1">Protease HtpX homolog</fullName>
        <ecNumber evidence="1">3.4.24.-</ecNumber>
    </recommendedName>
</protein>
<accession>Q57B74</accession>
<gene>
    <name evidence="1" type="primary">htpX</name>
    <name type="ordered locus">BruAb1_1793</name>
</gene>
<organism>
    <name type="scientific">Brucella abortus biovar 1 (strain 9-941)</name>
    <dbReference type="NCBI Taxonomy" id="262698"/>
    <lineage>
        <taxon>Bacteria</taxon>
        <taxon>Pseudomonadati</taxon>
        <taxon>Pseudomonadota</taxon>
        <taxon>Alphaproteobacteria</taxon>
        <taxon>Hyphomicrobiales</taxon>
        <taxon>Brucellaceae</taxon>
        <taxon>Brucella/Ochrobactrum group</taxon>
        <taxon>Brucella</taxon>
    </lineage>
</organism>
<feature type="chain" id="PRO_1000077444" description="Protease HtpX homolog">
    <location>
        <begin position="1"/>
        <end position="325"/>
    </location>
</feature>
<feature type="transmembrane region" description="Helical" evidence="1">
    <location>
        <begin position="20"/>
        <end position="40"/>
    </location>
</feature>
<feature type="transmembrane region" description="Helical" evidence="1">
    <location>
        <begin position="145"/>
        <end position="165"/>
    </location>
</feature>
<feature type="transmembrane region" description="Helical" evidence="1">
    <location>
        <begin position="173"/>
        <end position="193"/>
    </location>
</feature>
<feature type="region of interest" description="Disordered" evidence="2">
    <location>
        <begin position="288"/>
        <end position="325"/>
    </location>
</feature>
<feature type="compositionally biased region" description="Low complexity" evidence="2">
    <location>
        <begin position="306"/>
        <end position="325"/>
    </location>
</feature>
<feature type="active site" evidence="1">
    <location>
        <position position="131"/>
    </location>
</feature>
<feature type="binding site" evidence="1">
    <location>
        <position position="130"/>
    </location>
    <ligand>
        <name>Zn(2+)</name>
        <dbReference type="ChEBI" id="CHEBI:29105"/>
        <note>catalytic</note>
    </ligand>
</feature>
<feature type="binding site" evidence="1">
    <location>
        <position position="134"/>
    </location>
    <ligand>
        <name>Zn(2+)</name>
        <dbReference type="ChEBI" id="CHEBI:29105"/>
        <note>catalytic</note>
    </ligand>
</feature>
<feature type="binding site" evidence="1">
    <location>
        <position position="202"/>
    </location>
    <ligand>
        <name>Zn(2+)</name>
        <dbReference type="ChEBI" id="CHEBI:29105"/>
        <note>catalytic</note>
    </ligand>
</feature>
<keyword id="KW-0997">Cell inner membrane</keyword>
<keyword id="KW-1003">Cell membrane</keyword>
<keyword id="KW-0378">Hydrolase</keyword>
<keyword id="KW-0472">Membrane</keyword>
<keyword id="KW-0479">Metal-binding</keyword>
<keyword id="KW-0482">Metalloprotease</keyword>
<keyword id="KW-0645">Protease</keyword>
<keyword id="KW-0812">Transmembrane</keyword>
<keyword id="KW-1133">Transmembrane helix</keyword>
<keyword id="KW-0862">Zinc</keyword>